<sequence>MRSQGNMSDRLGVEVDCHSLGSNECPSMGSSFSPLESPTPTPTSIYSQGSLASPSWPENGSYPGHAYDRGTGSTPIRGHFRLASMPSHENMGLPPYSSLDGQDRMAVTDFLPSYDENADQFWLPSDVPKTYDHHVHGLPCPPSMHQYPPMLRSNYRHHPAPYFPESATNPCLSRPIFHHQPERLPPSLSMSHMMPWMGHTESIAPETIAPSQVAPVTPPPSYTDFSNSINTFKTHSPDTPIRSCSLGTVSGADTPLSRLSGGAGEYMDECHQSPIYRDASGVRLQRQPSRKMARKQPSKQSLSLENLPSIIKQVQFKCKEPGCKGRFKRQEHLKRHMKSHSKEKPHVCWVPGCHRAFSRSDNLNAHYTKTHSKRGGRNRYVATLDETSPDYNPDYRGPLTADGRPMPGGTLDESMPSREISMEWDE</sequence>
<keyword id="KW-0010">Activator</keyword>
<keyword id="KW-0183">Conidiation</keyword>
<keyword id="KW-0238">DNA-binding</keyword>
<keyword id="KW-0479">Metal-binding</keyword>
<keyword id="KW-0539">Nucleus</keyword>
<keyword id="KW-1185">Reference proteome</keyword>
<keyword id="KW-0677">Repeat</keyword>
<keyword id="KW-0749">Sporulation</keyword>
<keyword id="KW-0804">Transcription</keyword>
<keyword id="KW-0805">Transcription regulation</keyword>
<keyword id="KW-0862">Zinc</keyword>
<keyword id="KW-0863">Zinc-finger</keyword>
<feature type="chain" id="PRO_0000435941" description="C2H2 type master regulator of conidiophore development brlA">
    <location>
        <begin position="1"/>
        <end position="426"/>
    </location>
</feature>
<feature type="zinc finger region" description="C2H2-type 1" evidence="2">
    <location>
        <begin position="316"/>
        <end position="340"/>
    </location>
</feature>
<feature type="zinc finger region" description="C2H2-type 2" evidence="2">
    <location>
        <begin position="346"/>
        <end position="371"/>
    </location>
</feature>
<feature type="region of interest" description="Disordered" evidence="3">
    <location>
        <begin position="25"/>
        <end position="71"/>
    </location>
</feature>
<feature type="region of interest" description="Disordered" evidence="3">
    <location>
        <begin position="281"/>
        <end position="302"/>
    </location>
</feature>
<feature type="region of interest" description="Disordered" evidence="3">
    <location>
        <begin position="384"/>
        <end position="426"/>
    </location>
</feature>
<feature type="compositionally biased region" description="Low complexity" evidence="3">
    <location>
        <begin position="30"/>
        <end position="44"/>
    </location>
</feature>
<feature type="compositionally biased region" description="Polar residues" evidence="3">
    <location>
        <begin position="45"/>
        <end position="58"/>
    </location>
</feature>
<feature type="compositionally biased region" description="Basic residues" evidence="3">
    <location>
        <begin position="288"/>
        <end position="297"/>
    </location>
</feature>
<name>BRLA_ASPFU</name>
<gene>
    <name evidence="14" type="primary">brlA</name>
    <name type="ORF">AFUA_1G16590</name>
</gene>
<accession>Q4WRE4</accession>
<proteinExistence type="evidence at transcript level"/>
<comment type="function">
    <text evidence="1 4 6 8 10 11 12">BrlA, abaA and wetA are pivotal regulators of conidiophore development and conidium maturation (PubMed:17030990). They act individually and together to regulate their own expression and that of numerous other sporulation-specific genes (By similarity). Binds promoters of target genes at brlA response elements (BREs) containing the conserved sequence 5'-(C/A)(A/G)AGGG(G/A)-3' (By similarity). Positively regulates expression of the gliotoxin biosynthetic gene cluster in actively growing vegetative cells, and likely bridges morphological and chemical development during the life-cycle (PubMed:26032501). Regulates (directly or indirectly) the ergot cluster genes (PubMed:18333504). Positively regulates expression of the fumiquinazoline C biosynthetic gene cluster (PubMed:24612080). Positively regulates expression of the melanin biosynthetic gene cluster (PubMed:24123270). Mediates repression of ribosomal protein gene expression in response to nitrogen depletion (PubMed:19028996).</text>
</comment>
<comment type="subcellular location">
    <subcellularLocation>
        <location evidence="1">Nucleus</location>
    </subcellularLocation>
</comment>
<comment type="induction">
    <text evidence="4 5 7 9 13">Expression increases dramatically during the synchronous asexual development (PubMed:18298443). Expression is positively regulated by hsp90 (PubMed:22822234). Expression is controlled by upstream regulators fluG and flbA (PubMed:17030990). Expression is controlled by the histone methyltransferase clrD (PubMed:18849468). Expression is decreased by 2',4'-Dihydroxychalcone (2',4'-DHC) (PubMed:26190922).</text>
</comment>
<comment type="disruption phenotype">
    <text evidence="4 6 8 11 12">Abolishes completely conidiation (PubMed:17030990). Results in production of bristle-like structures instead of conidiophores and conidia and fails to produce ergot alkaloids (PubMed:18333504). Reduces significantly expression of gliotoxin biosynthetic gene cluster including gliM, gliP, gliT, and gliZ (PubMed:26032501). Impairs down-regulation of genes encoding ribosomal proteins under nitrogen-limiting, but not carbon-limiting, conditions (PubMed:19028996). Abolishes the production of fumiquinazoline C (PubMed:24612080).</text>
</comment>
<dbReference type="EMBL" id="AAHF01000004">
    <property type="protein sequence ID" value="EAL90988.1"/>
    <property type="molecule type" value="Genomic_DNA"/>
</dbReference>
<dbReference type="RefSeq" id="XP_753026.1">
    <property type="nucleotide sequence ID" value="XM_747933.1"/>
</dbReference>
<dbReference type="SMR" id="Q4WRE4"/>
<dbReference type="STRING" id="330879.Q4WRE4"/>
<dbReference type="EnsemblFungi" id="EAL90988">
    <property type="protein sequence ID" value="EAL90988"/>
    <property type="gene ID" value="AFUA_1G16590"/>
</dbReference>
<dbReference type="GeneID" id="3510052"/>
<dbReference type="KEGG" id="afm:AFUA_1G16590"/>
<dbReference type="eggNOG" id="KOG1721">
    <property type="taxonomic scope" value="Eukaryota"/>
</dbReference>
<dbReference type="HOGENOM" id="CLU_655506_0_0_1"/>
<dbReference type="InParanoid" id="Q4WRE4"/>
<dbReference type="OMA" id="WMPSHES"/>
<dbReference type="OrthoDB" id="654211at2759"/>
<dbReference type="Proteomes" id="UP000002530">
    <property type="component" value="Chromosome 1"/>
</dbReference>
<dbReference type="GO" id="GO:0005634">
    <property type="term" value="C:nucleus"/>
    <property type="evidence" value="ECO:0000318"/>
    <property type="project" value="GO_Central"/>
</dbReference>
<dbReference type="GO" id="GO:0000981">
    <property type="term" value="F:DNA-binding transcription factor activity, RNA polymerase II-specific"/>
    <property type="evidence" value="ECO:0000318"/>
    <property type="project" value="GO_Central"/>
</dbReference>
<dbReference type="GO" id="GO:0000978">
    <property type="term" value="F:RNA polymerase II cis-regulatory region sequence-specific DNA binding"/>
    <property type="evidence" value="ECO:0000318"/>
    <property type="project" value="GO_Central"/>
</dbReference>
<dbReference type="GO" id="GO:0008270">
    <property type="term" value="F:zinc ion binding"/>
    <property type="evidence" value="ECO:0007669"/>
    <property type="project" value="UniProtKB-KW"/>
</dbReference>
<dbReference type="GO" id="GO:0048315">
    <property type="term" value="P:conidium formation"/>
    <property type="evidence" value="ECO:0007669"/>
    <property type="project" value="UniProtKB-KW"/>
</dbReference>
<dbReference type="GO" id="GO:0006357">
    <property type="term" value="P:regulation of transcription by RNA polymerase II"/>
    <property type="evidence" value="ECO:0000318"/>
    <property type="project" value="GO_Central"/>
</dbReference>
<dbReference type="GO" id="GO:0030435">
    <property type="term" value="P:sporulation resulting in formation of a cellular spore"/>
    <property type="evidence" value="ECO:0007669"/>
    <property type="project" value="UniProtKB-KW"/>
</dbReference>
<dbReference type="FunFam" id="3.30.160.60:FF:000845">
    <property type="entry name" value="C2H2 type conidiation transcription factor BrlA"/>
    <property type="match status" value="1"/>
</dbReference>
<dbReference type="Gene3D" id="3.30.160.60">
    <property type="entry name" value="Classic Zinc Finger"/>
    <property type="match status" value="2"/>
</dbReference>
<dbReference type="InterPro" id="IPR036236">
    <property type="entry name" value="Znf_C2H2_sf"/>
</dbReference>
<dbReference type="InterPro" id="IPR013087">
    <property type="entry name" value="Znf_C2H2_type"/>
</dbReference>
<dbReference type="PANTHER" id="PTHR14003">
    <property type="entry name" value="TRANSCRIPTIONAL REPRESSOR PROTEIN YY"/>
    <property type="match status" value="1"/>
</dbReference>
<dbReference type="PANTHER" id="PTHR14003:SF19">
    <property type="entry name" value="YY2 TRANSCRIPTION FACTOR"/>
    <property type="match status" value="1"/>
</dbReference>
<dbReference type="Pfam" id="PF00096">
    <property type="entry name" value="zf-C2H2"/>
    <property type="match status" value="2"/>
</dbReference>
<dbReference type="SMART" id="SM00355">
    <property type="entry name" value="ZnF_C2H2"/>
    <property type="match status" value="2"/>
</dbReference>
<dbReference type="SUPFAM" id="SSF57667">
    <property type="entry name" value="beta-beta-alpha zinc fingers"/>
    <property type="match status" value="1"/>
</dbReference>
<dbReference type="PROSITE" id="PS00028">
    <property type="entry name" value="ZINC_FINGER_C2H2_1"/>
    <property type="match status" value="2"/>
</dbReference>
<dbReference type="PROSITE" id="PS50157">
    <property type="entry name" value="ZINC_FINGER_C2H2_2"/>
    <property type="match status" value="2"/>
</dbReference>
<protein>
    <recommendedName>
        <fullName evidence="15">C2H2 type master regulator of conidiophore development brlA</fullName>
    </recommendedName>
</protein>
<reference key="1">
    <citation type="journal article" date="2005" name="Nature">
        <title>Genomic sequence of the pathogenic and allergenic filamentous fungus Aspergillus fumigatus.</title>
        <authorList>
            <person name="Nierman W.C."/>
            <person name="Pain A."/>
            <person name="Anderson M.J."/>
            <person name="Wortman J.R."/>
            <person name="Kim H.S."/>
            <person name="Arroyo J."/>
            <person name="Berriman M."/>
            <person name="Abe K."/>
            <person name="Archer D.B."/>
            <person name="Bermejo C."/>
            <person name="Bennett J.W."/>
            <person name="Bowyer P."/>
            <person name="Chen D."/>
            <person name="Collins M."/>
            <person name="Coulsen R."/>
            <person name="Davies R."/>
            <person name="Dyer P.S."/>
            <person name="Farman M.L."/>
            <person name="Fedorova N."/>
            <person name="Fedorova N.D."/>
            <person name="Feldblyum T.V."/>
            <person name="Fischer R."/>
            <person name="Fosker N."/>
            <person name="Fraser A."/>
            <person name="Garcia J.L."/>
            <person name="Garcia M.J."/>
            <person name="Goble A."/>
            <person name="Goldman G.H."/>
            <person name="Gomi K."/>
            <person name="Griffith-Jones S."/>
            <person name="Gwilliam R."/>
            <person name="Haas B.J."/>
            <person name="Haas H."/>
            <person name="Harris D.E."/>
            <person name="Horiuchi H."/>
            <person name="Huang J."/>
            <person name="Humphray S."/>
            <person name="Jimenez J."/>
            <person name="Keller N."/>
            <person name="Khouri H."/>
            <person name="Kitamoto K."/>
            <person name="Kobayashi T."/>
            <person name="Konzack S."/>
            <person name="Kulkarni R."/>
            <person name="Kumagai T."/>
            <person name="Lafton A."/>
            <person name="Latge J.-P."/>
            <person name="Li W."/>
            <person name="Lord A."/>
            <person name="Lu C."/>
            <person name="Majoros W.H."/>
            <person name="May G.S."/>
            <person name="Miller B.L."/>
            <person name="Mohamoud Y."/>
            <person name="Molina M."/>
            <person name="Monod M."/>
            <person name="Mouyna I."/>
            <person name="Mulligan S."/>
            <person name="Murphy L.D."/>
            <person name="O'Neil S."/>
            <person name="Paulsen I."/>
            <person name="Penalva M.A."/>
            <person name="Pertea M."/>
            <person name="Price C."/>
            <person name="Pritchard B.L."/>
            <person name="Quail M.A."/>
            <person name="Rabbinowitsch E."/>
            <person name="Rawlins N."/>
            <person name="Rajandream M.A."/>
            <person name="Reichard U."/>
            <person name="Renauld H."/>
            <person name="Robson G.D."/>
            <person name="Rodriguez de Cordoba S."/>
            <person name="Rodriguez-Pena J.M."/>
            <person name="Ronning C.M."/>
            <person name="Rutter S."/>
            <person name="Salzberg S.L."/>
            <person name="Sanchez M."/>
            <person name="Sanchez-Ferrero J.C."/>
            <person name="Saunders D."/>
            <person name="Seeger K."/>
            <person name="Squares R."/>
            <person name="Squares S."/>
            <person name="Takeuchi M."/>
            <person name="Tekaia F."/>
            <person name="Turner G."/>
            <person name="Vazquez de Aldana C.R."/>
            <person name="Weidman J."/>
            <person name="White O."/>
            <person name="Woodward J.R."/>
            <person name="Yu J.-H."/>
            <person name="Fraser C.M."/>
            <person name="Galagan J.E."/>
            <person name="Asai K."/>
            <person name="Machida M."/>
            <person name="Hall N."/>
            <person name="Barrell B.G."/>
            <person name="Denning D.W."/>
        </authorList>
    </citation>
    <scope>NUCLEOTIDE SEQUENCE [LARGE SCALE GENOMIC DNA]</scope>
    <source>
        <strain>ATCC MYA-4609 / CBS 101355 / FGSC A1100 / Af293</strain>
    </source>
</reference>
<reference key="2">
    <citation type="journal article" date="2006" name="Eukaryot. Cell">
        <title>Upstream and downstream regulation of asexual development in Aspergillus fumigatus.</title>
        <authorList>
            <person name="Mah J.H."/>
            <person name="Yu J.H."/>
        </authorList>
    </citation>
    <scope>FUNCTION</scope>
    <scope>DISRUPTION PHENOTYPE</scope>
    <scope>INDUCTION</scope>
</reference>
<reference key="3">
    <citation type="journal article" date="2007" name="Mycologia">
        <title>Association of ergot alkaloids with conidiation in Aspergillus fumigatus.</title>
        <authorList>
            <person name="Coyle C.M."/>
            <person name="Kenaley S.C."/>
            <person name="Rittenour W.R."/>
            <person name="Panaccione D.G."/>
        </authorList>
    </citation>
    <scope>FUNCTION</scope>
    <scope>DISRUPTION PHENOTYPE</scope>
</reference>
<reference key="4">
    <citation type="journal article" date="2008" name="Eukaryot. Cell">
        <title>H3K9 methylation regulates growth and development in Aspergillus fumigatus.</title>
        <authorList>
            <person name="Palmer J.M."/>
            <person name="Perrin R.M."/>
            <person name="Dagenais T.R."/>
            <person name="Keller N.P."/>
        </authorList>
    </citation>
    <scope>INDUCTION</scope>
</reference>
<reference key="5">
    <citation type="journal article" date="2008" name="Mol. Microbiol.">
        <title>Functional characterization of the Aspergillus fumigatus CRZ1 homologue, CrzA.</title>
        <authorList>
            <person name="Soriani F.M."/>
            <person name="Malavazi I."/>
            <person name="da Silva Ferreira M.E."/>
            <person name="Savoldi M."/>
            <person name="Von Zeska Kress M.R."/>
            <person name="de Souza Goldman M.H."/>
            <person name="Loss O."/>
            <person name="Bignell E."/>
            <person name="Goldman G.H."/>
        </authorList>
    </citation>
    <scope>INDUCTION</scope>
</reference>
<reference key="6">
    <citation type="journal article" date="2009" name="Eukaryot. Cell">
        <title>Transcriptional profiling identifies a role for BrlA in the response to nitrogen depletion and for StuA in the regulation of secondary metabolite clusters in Aspergillus fumigatus.</title>
        <authorList>
            <person name="Twumasi-Boateng K."/>
            <person name="Yu Y."/>
            <person name="Chen D."/>
            <person name="Gravelat F.N."/>
            <person name="Nierman W.C."/>
            <person name="Sheppard D.C."/>
        </authorList>
    </citation>
    <scope>FUNCTION</scope>
    <scope>DISRUPTION PHENOTYPE</scope>
</reference>
<reference key="7">
    <citation type="journal article" date="2012" name="Eukaryot. Cell">
        <title>Heat shock protein 90 is required for conidiation and cell wall integrity in Aspergillus fumigatus.</title>
        <authorList>
            <person name="Lamoth F."/>
            <person name="Juvvadi P.R."/>
            <person name="Fortwendel J.R."/>
            <person name="Steinbach W.J."/>
        </authorList>
    </citation>
    <scope>INDUCTION</scope>
</reference>
<reference key="8">
    <citation type="journal article" date="2013" name="Eukaryot. Cell">
        <title>Laccases involved in 1,8-dihydroxynaphthalene melanin biosynthesis in Aspergillus fumigatus are regulated by developmental factors and copper homeostasis.</title>
        <authorList>
            <person name="Upadhyay S."/>
            <person name="Torres G."/>
            <person name="Lin X."/>
        </authorList>
    </citation>
    <scope>FUNCTION</scope>
</reference>
<reference key="9">
    <citation type="journal article" date="2014" name="Cell. Microbiol.">
        <title>Co-ordination between BrlA regulation and secretion of the oxidoreductase FmqD directs selective accumulation of fumiquinazoline C to conidial tissues in Aspergillus fumigatus.</title>
        <authorList>
            <person name="Lim F.Y."/>
            <person name="Ames B."/>
            <person name="Walsh C.T."/>
            <person name="Keller N.P."/>
        </authorList>
    </citation>
    <scope>FUNCTION</scope>
    <scope>DISRUPTION PHENOTYPE</scope>
</reference>
<reference key="10">
    <citation type="journal article" date="2015" name="Biochem. Biophys. Res. Commun.">
        <title>Proteomic analyses reveal the key roles of BrlA and AbaA in biogenesis of gliotoxin in Aspergillus fumigatus.</title>
        <authorList>
            <person name="Shin K.S."/>
            <person name="Kim Y.H."/>
            <person name="Yu J.H."/>
        </authorList>
    </citation>
    <scope>FUNCTION</scope>
    <scope>DISRUPTION PHENOTYPE</scope>
</reference>
<reference key="11">
    <citation type="journal article" date="2015" name="Mycobiology">
        <title>In vitro antifungal activity and mode of action of 2',4'-dihydroxychalcone against Aspergillus fumigatus.</title>
        <authorList>
            <person name="Seo Y.H."/>
            <person name="Kim S.S."/>
            <person name="Shin K.S."/>
        </authorList>
    </citation>
    <scope>INDUCTION</scope>
</reference>
<organism>
    <name type="scientific">Aspergillus fumigatus (strain ATCC MYA-4609 / CBS 101355 / FGSC A1100 / Af293)</name>
    <name type="common">Neosartorya fumigata</name>
    <dbReference type="NCBI Taxonomy" id="330879"/>
    <lineage>
        <taxon>Eukaryota</taxon>
        <taxon>Fungi</taxon>
        <taxon>Dikarya</taxon>
        <taxon>Ascomycota</taxon>
        <taxon>Pezizomycotina</taxon>
        <taxon>Eurotiomycetes</taxon>
        <taxon>Eurotiomycetidae</taxon>
        <taxon>Eurotiales</taxon>
        <taxon>Aspergillaceae</taxon>
        <taxon>Aspergillus</taxon>
        <taxon>Aspergillus subgen. Fumigati</taxon>
    </lineage>
</organism>
<evidence type="ECO:0000250" key="1">
    <source>
        <dbReference type="UniProtKB" id="P10069"/>
    </source>
</evidence>
<evidence type="ECO:0000255" key="2">
    <source>
        <dbReference type="PROSITE-ProRule" id="PRU00042"/>
    </source>
</evidence>
<evidence type="ECO:0000256" key="3">
    <source>
        <dbReference type="SAM" id="MobiDB-lite"/>
    </source>
</evidence>
<evidence type="ECO:0000269" key="4">
    <source>
    </source>
</evidence>
<evidence type="ECO:0000269" key="5">
    <source>
    </source>
</evidence>
<evidence type="ECO:0000269" key="6">
    <source>
    </source>
</evidence>
<evidence type="ECO:0000269" key="7">
    <source>
    </source>
</evidence>
<evidence type="ECO:0000269" key="8">
    <source>
    </source>
</evidence>
<evidence type="ECO:0000269" key="9">
    <source>
    </source>
</evidence>
<evidence type="ECO:0000269" key="10">
    <source>
    </source>
</evidence>
<evidence type="ECO:0000269" key="11">
    <source>
    </source>
</evidence>
<evidence type="ECO:0000269" key="12">
    <source>
    </source>
</evidence>
<evidence type="ECO:0000269" key="13">
    <source>
    </source>
</evidence>
<evidence type="ECO:0000303" key="14">
    <source>
    </source>
</evidence>
<evidence type="ECO:0000305" key="15"/>